<gene>
    <name evidence="1" type="primary">rpsB</name>
    <name type="ordered locus">HDEF_1312</name>
</gene>
<accession>C4K5W9</accession>
<proteinExistence type="inferred from homology"/>
<sequence length="241" mass="26910">MVAISMREMLEAGVHFGHKTRYWNPKMKPFVFGSRNGIHIINLEFTVTMLNNALSELRKISARKGKILFVGTKRAASEAIKEAAGNCAQFFVHHRWLGGMLTNWKTVRQSIKRLKDLETQSQDGTFEKLTKKEALMRTRELNKLENSLGGIKNMGGLPDALFVIDANHEHIAVKEANNLGIPVFSIVDTNSDPDGIDFIIPGNDDAIRSIKLYLNAVSAAISEGRSENSVMQKEESLIETK</sequence>
<comment type="similarity">
    <text evidence="1">Belongs to the universal ribosomal protein uS2 family.</text>
</comment>
<keyword id="KW-0687">Ribonucleoprotein</keyword>
<keyword id="KW-0689">Ribosomal protein</keyword>
<feature type="chain" id="PRO_1000204886" description="Small ribosomal subunit protein uS2">
    <location>
        <begin position="1"/>
        <end position="241"/>
    </location>
</feature>
<name>RS2_HAMD5</name>
<dbReference type="EMBL" id="CP001277">
    <property type="protein sequence ID" value="ACQ67962.1"/>
    <property type="molecule type" value="Genomic_DNA"/>
</dbReference>
<dbReference type="RefSeq" id="WP_015873751.1">
    <property type="nucleotide sequence ID" value="NC_012751.1"/>
</dbReference>
<dbReference type="SMR" id="C4K5W9"/>
<dbReference type="STRING" id="572265.HDEF_1312"/>
<dbReference type="GeneID" id="66261006"/>
<dbReference type="KEGG" id="hde:HDEF_1312"/>
<dbReference type="eggNOG" id="COG0052">
    <property type="taxonomic scope" value="Bacteria"/>
</dbReference>
<dbReference type="HOGENOM" id="CLU_040318_1_2_6"/>
<dbReference type="Proteomes" id="UP000002334">
    <property type="component" value="Chromosome"/>
</dbReference>
<dbReference type="GO" id="GO:0022627">
    <property type="term" value="C:cytosolic small ribosomal subunit"/>
    <property type="evidence" value="ECO:0007669"/>
    <property type="project" value="TreeGrafter"/>
</dbReference>
<dbReference type="GO" id="GO:0003735">
    <property type="term" value="F:structural constituent of ribosome"/>
    <property type="evidence" value="ECO:0007669"/>
    <property type="project" value="InterPro"/>
</dbReference>
<dbReference type="GO" id="GO:0006412">
    <property type="term" value="P:translation"/>
    <property type="evidence" value="ECO:0007669"/>
    <property type="project" value="UniProtKB-UniRule"/>
</dbReference>
<dbReference type="CDD" id="cd01425">
    <property type="entry name" value="RPS2"/>
    <property type="match status" value="1"/>
</dbReference>
<dbReference type="FunFam" id="1.10.287.610:FF:000001">
    <property type="entry name" value="30S ribosomal protein S2"/>
    <property type="match status" value="1"/>
</dbReference>
<dbReference type="Gene3D" id="3.40.50.10490">
    <property type="entry name" value="Glucose-6-phosphate isomerase like protein, domain 1"/>
    <property type="match status" value="1"/>
</dbReference>
<dbReference type="Gene3D" id="1.10.287.610">
    <property type="entry name" value="Helix hairpin bin"/>
    <property type="match status" value="1"/>
</dbReference>
<dbReference type="HAMAP" id="MF_00291_B">
    <property type="entry name" value="Ribosomal_uS2_B"/>
    <property type="match status" value="1"/>
</dbReference>
<dbReference type="InterPro" id="IPR001865">
    <property type="entry name" value="Ribosomal_uS2"/>
</dbReference>
<dbReference type="InterPro" id="IPR005706">
    <property type="entry name" value="Ribosomal_uS2_bac/mit/plastid"/>
</dbReference>
<dbReference type="InterPro" id="IPR018130">
    <property type="entry name" value="Ribosomal_uS2_CS"/>
</dbReference>
<dbReference type="InterPro" id="IPR023591">
    <property type="entry name" value="Ribosomal_uS2_flav_dom_sf"/>
</dbReference>
<dbReference type="NCBIfam" id="TIGR01011">
    <property type="entry name" value="rpsB_bact"/>
    <property type="match status" value="1"/>
</dbReference>
<dbReference type="PANTHER" id="PTHR12534">
    <property type="entry name" value="30S RIBOSOMAL PROTEIN S2 PROKARYOTIC AND ORGANELLAR"/>
    <property type="match status" value="1"/>
</dbReference>
<dbReference type="PANTHER" id="PTHR12534:SF0">
    <property type="entry name" value="SMALL RIBOSOMAL SUBUNIT PROTEIN US2M"/>
    <property type="match status" value="1"/>
</dbReference>
<dbReference type="Pfam" id="PF00318">
    <property type="entry name" value="Ribosomal_S2"/>
    <property type="match status" value="1"/>
</dbReference>
<dbReference type="PRINTS" id="PR00395">
    <property type="entry name" value="RIBOSOMALS2"/>
</dbReference>
<dbReference type="SUPFAM" id="SSF52313">
    <property type="entry name" value="Ribosomal protein S2"/>
    <property type="match status" value="1"/>
</dbReference>
<dbReference type="PROSITE" id="PS00962">
    <property type="entry name" value="RIBOSOMAL_S2_1"/>
    <property type="match status" value="1"/>
</dbReference>
<dbReference type="PROSITE" id="PS00963">
    <property type="entry name" value="RIBOSOMAL_S2_2"/>
    <property type="match status" value="1"/>
</dbReference>
<reference key="1">
    <citation type="journal article" date="2009" name="Proc. Natl. Acad. Sci. U.S.A.">
        <title>Hamiltonella defensa, genome evolution of protective bacterial endosymbiont from pathogenic ancestors.</title>
        <authorList>
            <person name="Degnan P.H."/>
            <person name="Yu Y."/>
            <person name="Sisneros N."/>
            <person name="Wing R.A."/>
            <person name="Moran N.A."/>
        </authorList>
    </citation>
    <scope>NUCLEOTIDE SEQUENCE [LARGE SCALE GENOMIC DNA]</scope>
    <source>
        <strain>5AT</strain>
    </source>
</reference>
<protein>
    <recommendedName>
        <fullName evidence="1">Small ribosomal subunit protein uS2</fullName>
    </recommendedName>
    <alternativeName>
        <fullName evidence="2">30S ribosomal protein S2</fullName>
    </alternativeName>
</protein>
<evidence type="ECO:0000255" key="1">
    <source>
        <dbReference type="HAMAP-Rule" id="MF_00291"/>
    </source>
</evidence>
<evidence type="ECO:0000305" key="2"/>
<organism>
    <name type="scientific">Hamiltonella defensa subsp. Acyrthosiphon pisum (strain 5AT)</name>
    <dbReference type="NCBI Taxonomy" id="572265"/>
    <lineage>
        <taxon>Bacteria</taxon>
        <taxon>Pseudomonadati</taxon>
        <taxon>Pseudomonadota</taxon>
        <taxon>Gammaproteobacteria</taxon>
        <taxon>Enterobacterales</taxon>
        <taxon>Enterobacteriaceae</taxon>
        <taxon>aphid secondary symbionts</taxon>
        <taxon>Candidatus Hamiltonella</taxon>
    </lineage>
</organism>